<gene>
    <name type="primary">sptssa-b</name>
    <name type="synonym">ssspta-b</name>
</gene>
<organism>
    <name type="scientific">Xenopus laevis</name>
    <name type="common">African clawed frog</name>
    <dbReference type="NCBI Taxonomy" id="8355"/>
    <lineage>
        <taxon>Eukaryota</taxon>
        <taxon>Metazoa</taxon>
        <taxon>Chordata</taxon>
        <taxon>Craniata</taxon>
        <taxon>Vertebrata</taxon>
        <taxon>Euteleostomi</taxon>
        <taxon>Amphibia</taxon>
        <taxon>Batrachia</taxon>
        <taxon>Anura</taxon>
        <taxon>Pipoidea</taxon>
        <taxon>Pipidae</taxon>
        <taxon>Xenopodinae</taxon>
        <taxon>Xenopus</taxon>
        <taxon>Xenopus</taxon>
    </lineage>
</organism>
<name>SPSAB_XENLA</name>
<dbReference type="EMBL" id="BC072957">
    <property type="protein sequence ID" value="AAH72957.1"/>
    <property type="molecule type" value="mRNA"/>
</dbReference>
<dbReference type="SMR" id="Q6GPZ5"/>
<dbReference type="DNASU" id="443997"/>
<dbReference type="GeneID" id="443997"/>
<dbReference type="KEGG" id="xla:443997"/>
<dbReference type="AGR" id="Xenbase:XB-GENE-949955"/>
<dbReference type="CTD" id="443997"/>
<dbReference type="Xenbase" id="XB-GENE-949955">
    <property type="gene designation" value="sptssa.L"/>
</dbReference>
<dbReference type="OrthoDB" id="202672at2759"/>
<dbReference type="UniPathway" id="UPA00222"/>
<dbReference type="Proteomes" id="UP000186698">
    <property type="component" value="Chromosome 8L"/>
</dbReference>
<dbReference type="Bgee" id="443997">
    <property type="expression patterns" value="Expressed in internal ear and 19 other cell types or tissues"/>
</dbReference>
<dbReference type="GO" id="GO:0005789">
    <property type="term" value="C:endoplasmic reticulum membrane"/>
    <property type="evidence" value="ECO:0007669"/>
    <property type="project" value="UniProtKB-SubCell"/>
</dbReference>
<dbReference type="GO" id="GO:0017059">
    <property type="term" value="C:serine palmitoyltransferase complex"/>
    <property type="evidence" value="ECO:0000250"/>
    <property type="project" value="UniProtKB"/>
</dbReference>
<dbReference type="GO" id="GO:0004758">
    <property type="term" value="F:serine C-palmitoyltransferase activity"/>
    <property type="evidence" value="ECO:0007669"/>
    <property type="project" value="TreeGrafter"/>
</dbReference>
<dbReference type="GO" id="GO:0046513">
    <property type="term" value="P:ceramide biosynthetic process"/>
    <property type="evidence" value="ECO:0000318"/>
    <property type="project" value="GO_Central"/>
</dbReference>
<dbReference type="InterPro" id="IPR024512">
    <property type="entry name" value="Ser_palmitoyltrfase_ssu-like"/>
</dbReference>
<dbReference type="InterPro" id="IPR051900">
    <property type="entry name" value="SPT_small_subunit"/>
</dbReference>
<dbReference type="PANTHER" id="PTHR47084">
    <property type="entry name" value="SERINE PALMITOYLTRANSFERASE SMALL SUBUNIT A"/>
    <property type="match status" value="1"/>
</dbReference>
<dbReference type="PANTHER" id="PTHR47084:SF1">
    <property type="entry name" value="SERINE PALMITOYLTRANSFERASE SMALL SUBUNIT A"/>
    <property type="match status" value="1"/>
</dbReference>
<dbReference type="Pfam" id="PF11779">
    <property type="entry name" value="SPT_ssu-like"/>
    <property type="match status" value="1"/>
</dbReference>
<comment type="function">
    <text evidence="1">Component of the serine palmitoyltransferase multisubunit enzyme (SPT) that catalyzes the initial and rate-limiting step in sphingolipid biosynthesis by condensing L-serine and activated acyl-CoA (most commonly palmitoyl-CoA) to form long-chain bases. The SPT complex is composed of SPTLC1, SPTLC2 or SPTLC3 and SPTSSA or SPTSSB. Within this complex, the heterodimer consisting of SPTLC1 and SPTLC2/SPTLC3 forms the catalytic core. Within the SPT complex, SPTSSA stimulates the catalytic activity and plays a role in substrate specificity, which depends upon the overall complex composition. The SPTLC1-SPTLC2-SPTSSA complex shows a strong preference for C16-CoA substrate, while the SPTLC1-SPTLC3-SPTSSA isozyme uses both C14-CoA and C16-CoA as substrates, with a slight preference for C14-CoA. Independently of its action as a SPT component, may be involved in MBOAT7 localization to mitochondria-associated membranes, a membrane bridge between the endoplasmic reticulum and mitochondria, may hence affect MBOAT7-catalyzed incorporation of arachidonic acid into phosphatidylinositol.</text>
</comment>
<comment type="pathway">
    <text>Lipid metabolism; sphingolipid metabolism.</text>
</comment>
<comment type="subunit">
    <text evidence="1">Component of the serine palmitoyltransferase (SPT) complex, which is composed of SPTLC1, SPTLC2 or SPTLC3 and SPTSSA or SPTSSB. The heterodimer consisting of SPTLC1 and SPTLC2/SPTLC3 forms the catalytic core of the enzyme, while SPTSSA or SPTSSB subunits determine substrate specificity. SPT also interacts with ORMDL proteins, especially ORMDL3, which negatively regulate SPT activity in the presence of ceramides.</text>
</comment>
<comment type="subcellular location">
    <subcellularLocation>
        <location evidence="3">Endoplasmic reticulum membrane</location>
        <topology evidence="3">Multi-pass membrane protein</topology>
    </subcellularLocation>
</comment>
<comment type="similarity">
    <text evidence="3">Belongs to the SPTSS family. SPTSSA subfamily.</text>
</comment>
<sequence>MKVSCEDVNGPRSSLGRAWNHVSWLYYQYLLVTALYMLEPWERTVFNSMLVSIVGMALYTGYIFMPQHILAILHYFEIVQ</sequence>
<protein>
    <recommendedName>
        <fullName>Serine palmitoyltransferase small subunit A-B</fullName>
    </recommendedName>
    <alternativeName>
        <fullName>Small subunit of serine palmitoyltransferase A-B</fullName>
        <shortName>ssSPTa-B</shortName>
    </alternativeName>
</protein>
<reference key="1">
    <citation type="submission" date="2004-06" db="EMBL/GenBank/DDBJ databases">
        <authorList>
            <consortium name="NIH - Xenopus Gene Collection (XGC) project"/>
        </authorList>
    </citation>
    <scope>NUCLEOTIDE SEQUENCE [LARGE SCALE MRNA]</scope>
    <source>
        <tissue>Embryo</tissue>
    </source>
</reference>
<accession>Q6GPZ5</accession>
<evidence type="ECO:0000250" key="1">
    <source>
        <dbReference type="UniProtKB" id="Q969W0"/>
    </source>
</evidence>
<evidence type="ECO:0000255" key="2"/>
<evidence type="ECO:0000305" key="3"/>
<feature type="chain" id="PRO_0000293707" description="Serine palmitoyltransferase small subunit A-B">
    <location>
        <begin position="1"/>
        <end position="80"/>
    </location>
</feature>
<feature type="topological domain" description="Cytoplasmic" evidence="2">
    <location>
        <begin position="1"/>
        <end position="21"/>
    </location>
</feature>
<feature type="transmembrane region" description="Helical" evidence="2">
    <location>
        <begin position="22"/>
        <end position="38"/>
    </location>
</feature>
<feature type="topological domain" description="Lumenal" evidence="2">
    <location>
        <begin position="39"/>
        <end position="43"/>
    </location>
</feature>
<feature type="transmembrane region" description="Helical" evidence="2">
    <location>
        <begin position="44"/>
        <end position="66"/>
    </location>
</feature>
<feature type="topological domain" description="Cytoplasmic" evidence="2">
    <location>
        <begin position="67"/>
        <end position="80"/>
    </location>
</feature>
<feature type="site" description="Within the serine palmitoyltransferase (SPT) complex, defines the length of the acyl chain-binding pocket, determining the acyl-CoA substrate preference" evidence="1">
    <location>
        <position position="37"/>
    </location>
</feature>
<keyword id="KW-0256">Endoplasmic reticulum</keyword>
<keyword id="KW-0443">Lipid metabolism</keyword>
<keyword id="KW-0472">Membrane</keyword>
<keyword id="KW-1185">Reference proteome</keyword>
<keyword id="KW-0746">Sphingolipid metabolism</keyword>
<keyword id="KW-0812">Transmembrane</keyword>
<keyword id="KW-1133">Transmembrane helix</keyword>
<proteinExistence type="inferred from homology"/>